<feature type="chain" id="PRO_0000102962" description="SsrA-binding protein">
    <location>
        <begin position="1"/>
        <end position="159"/>
    </location>
</feature>
<accession>Q5QW47</accession>
<gene>
    <name evidence="1" type="primary">smpB</name>
    <name type="ordered locus">IL0898</name>
</gene>
<dbReference type="EMBL" id="AE017340">
    <property type="protein sequence ID" value="AAV81738.1"/>
    <property type="molecule type" value="Genomic_DNA"/>
</dbReference>
<dbReference type="RefSeq" id="WP_011234149.1">
    <property type="nucleotide sequence ID" value="NC_006512.1"/>
</dbReference>
<dbReference type="SMR" id="Q5QW47"/>
<dbReference type="STRING" id="283942.IL0898"/>
<dbReference type="GeneID" id="41336053"/>
<dbReference type="KEGG" id="ilo:IL0898"/>
<dbReference type="eggNOG" id="COG0691">
    <property type="taxonomic scope" value="Bacteria"/>
</dbReference>
<dbReference type="HOGENOM" id="CLU_108953_3_0_6"/>
<dbReference type="OrthoDB" id="9805462at2"/>
<dbReference type="Proteomes" id="UP000001171">
    <property type="component" value="Chromosome"/>
</dbReference>
<dbReference type="GO" id="GO:0005829">
    <property type="term" value="C:cytosol"/>
    <property type="evidence" value="ECO:0007669"/>
    <property type="project" value="TreeGrafter"/>
</dbReference>
<dbReference type="GO" id="GO:0003723">
    <property type="term" value="F:RNA binding"/>
    <property type="evidence" value="ECO:0007669"/>
    <property type="project" value="UniProtKB-UniRule"/>
</dbReference>
<dbReference type="GO" id="GO:0070929">
    <property type="term" value="P:trans-translation"/>
    <property type="evidence" value="ECO:0007669"/>
    <property type="project" value="UniProtKB-UniRule"/>
</dbReference>
<dbReference type="CDD" id="cd09294">
    <property type="entry name" value="SmpB"/>
    <property type="match status" value="1"/>
</dbReference>
<dbReference type="Gene3D" id="2.40.280.10">
    <property type="match status" value="1"/>
</dbReference>
<dbReference type="HAMAP" id="MF_00023">
    <property type="entry name" value="SmpB"/>
    <property type="match status" value="1"/>
</dbReference>
<dbReference type="InterPro" id="IPR023620">
    <property type="entry name" value="SmpB"/>
</dbReference>
<dbReference type="InterPro" id="IPR000037">
    <property type="entry name" value="SsrA-bd_prot"/>
</dbReference>
<dbReference type="InterPro" id="IPR020081">
    <property type="entry name" value="SsrA-bd_prot_CS"/>
</dbReference>
<dbReference type="NCBIfam" id="NF003843">
    <property type="entry name" value="PRK05422.1"/>
    <property type="match status" value="1"/>
</dbReference>
<dbReference type="NCBIfam" id="TIGR00086">
    <property type="entry name" value="smpB"/>
    <property type="match status" value="1"/>
</dbReference>
<dbReference type="PANTHER" id="PTHR30308:SF2">
    <property type="entry name" value="SSRA-BINDING PROTEIN"/>
    <property type="match status" value="1"/>
</dbReference>
<dbReference type="PANTHER" id="PTHR30308">
    <property type="entry name" value="TMRNA-BINDING COMPONENT OF TRANS-TRANSLATION TAGGING COMPLEX"/>
    <property type="match status" value="1"/>
</dbReference>
<dbReference type="Pfam" id="PF01668">
    <property type="entry name" value="SmpB"/>
    <property type="match status" value="1"/>
</dbReference>
<dbReference type="SUPFAM" id="SSF74982">
    <property type="entry name" value="Small protein B (SmpB)"/>
    <property type="match status" value="1"/>
</dbReference>
<dbReference type="PROSITE" id="PS01317">
    <property type="entry name" value="SSRP"/>
    <property type="match status" value="1"/>
</dbReference>
<organism>
    <name type="scientific">Idiomarina loihiensis (strain ATCC BAA-735 / DSM 15497 / L2-TR)</name>
    <dbReference type="NCBI Taxonomy" id="283942"/>
    <lineage>
        <taxon>Bacteria</taxon>
        <taxon>Pseudomonadati</taxon>
        <taxon>Pseudomonadota</taxon>
        <taxon>Gammaproteobacteria</taxon>
        <taxon>Alteromonadales</taxon>
        <taxon>Idiomarinaceae</taxon>
        <taxon>Idiomarina</taxon>
    </lineage>
</organism>
<protein>
    <recommendedName>
        <fullName evidence="1">SsrA-binding protein</fullName>
    </recommendedName>
    <alternativeName>
        <fullName evidence="1">Small protein B</fullName>
    </alternativeName>
</protein>
<reference key="1">
    <citation type="journal article" date="2004" name="Proc. Natl. Acad. Sci. U.S.A.">
        <title>Genome sequence of the deep-sea gamma-proteobacterium Idiomarina loihiensis reveals amino acid fermentation as a source of carbon and energy.</title>
        <authorList>
            <person name="Hou S."/>
            <person name="Saw J.H."/>
            <person name="Lee K.S."/>
            <person name="Freitas T.A."/>
            <person name="Belisle C."/>
            <person name="Kawarabayasi Y."/>
            <person name="Donachie S.P."/>
            <person name="Pikina A."/>
            <person name="Galperin M.Y."/>
            <person name="Koonin E.V."/>
            <person name="Makarova K.S."/>
            <person name="Omelchenko M.V."/>
            <person name="Sorokin A."/>
            <person name="Wolf Y.I."/>
            <person name="Li Q.X."/>
            <person name="Keum Y.S."/>
            <person name="Campbell S."/>
            <person name="Denery J."/>
            <person name="Aizawa S."/>
            <person name="Shibata S."/>
            <person name="Malahoff A."/>
            <person name="Alam M."/>
        </authorList>
    </citation>
    <scope>NUCLEOTIDE SEQUENCE [LARGE SCALE GENOMIC DNA]</scope>
    <source>
        <strain>ATCC BAA-735 / DSM 15497 / L2-TR</strain>
    </source>
</reference>
<evidence type="ECO:0000255" key="1">
    <source>
        <dbReference type="HAMAP-Rule" id="MF_00023"/>
    </source>
</evidence>
<proteinExistence type="inferred from homology"/>
<comment type="function">
    <text evidence="1">Required for rescue of stalled ribosomes mediated by trans-translation. Binds to transfer-messenger RNA (tmRNA), required for stable association of tmRNA with ribosomes. tmRNA and SmpB together mimic tRNA shape, replacing the anticodon stem-loop with SmpB. tmRNA is encoded by the ssrA gene; the 2 termini fold to resemble tRNA(Ala) and it encodes a 'tag peptide', a short internal open reading frame. During trans-translation Ala-aminoacylated tmRNA acts like a tRNA, entering the A-site of stalled ribosomes, displacing the stalled mRNA. The ribosome then switches to translate the ORF on the tmRNA; the nascent peptide is terminated with the 'tag peptide' encoded by the tmRNA and targeted for degradation. The ribosome is freed to recommence translation, which seems to be the essential function of trans-translation.</text>
</comment>
<comment type="subcellular location">
    <subcellularLocation>
        <location evidence="1">Cytoplasm</location>
    </subcellularLocation>
    <text evidence="1">The tmRNA-SmpB complex associates with stalled 70S ribosomes.</text>
</comment>
<comment type="similarity">
    <text evidence="1">Belongs to the SmpB family.</text>
</comment>
<name>SSRP_IDILO</name>
<keyword id="KW-0963">Cytoplasm</keyword>
<keyword id="KW-1185">Reference proteome</keyword>
<keyword id="KW-0694">RNA-binding</keyword>
<sequence>MSKKKPQQSSNTIARNKKARHEYFLEDKFEAGVSLQGWEIKSIRAGKVNISDSYVIIKNGEAYLLGAEIQPLNQASSHVYCEPDRSRKLLLKRRELDKLIGASEREGYSIVATTIYWKGPWAKLEIFLAQGKKSHDKRDTIKERDWQRQKARIMKHSVR</sequence>